<reference key="1">
    <citation type="journal article" date="2008" name="Proc. Natl. Acad. Sci. U.S.A.">
        <title>Complete genome of the uncultured termite group 1 bacteria in a single host protist cell.</title>
        <authorList>
            <person name="Hongoh Y."/>
            <person name="Sharma V.K."/>
            <person name="Prakash T."/>
            <person name="Noda S."/>
            <person name="Taylor T.D."/>
            <person name="Kudo T."/>
            <person name="Sakaki Y."/>
            <person name="Toyoda A."/>
            <person name="Hattori M."/>
            <person name="Ohkuma M."/>
        </authorList>
    </citation>
    <scope>NUCLEOTIDE SEQUENCE [LARGE SCALE GENOMIC DNA]</scope>
</reference>
<evidence type="ECO:0000255" key="1">
    <source>
        <dbReference type="HAMAP-Rule" id="MF_00211"/>
    </source>
</evidence>
<sequence>MIREAIYEIVNRNNLTIDKTKEVMNRIMDGGATDAQIASFLTSLRLKGETIEEITACAMVMREKCQKLNPEFDVLDIVGTGGDELATFNISTISSFIIAAAGVPVAKHGNRSVSSKCGSADLLEVLGVNIMLTPQQCEAILKKVGMCFLMAQTFHSSMKYVAKVRKELGIRTIFNILGPLANPAKASYELIGVYDENLVEPIASVLVNLGVKRAMVVHGHDGLDEITLSDTTTICEVNRGRLNSFFITPEQFGLKRCSLSELIGGTPQENREIALNILNGEQGAKRDTVVLNSAVCLYMFYDNMTLKQCLRMAQDMIDSKKALNKLDEFIKASHET</sequence>
<accession>B1GZB9</accession>
<feature type="chain" id="PRO_1000099855" description="Anthranilate phosphoribosyltransferase">
    <location>
        <begin position="1"/>
        <end position="336"/>
    </location>
</feature>
<feature type="binding site" evidence="1">
    <location>
        <position position="79"/>
    </location>
    <ligand>
        <name>5-phospho-alpha-D-ribose 1-diphosphate</name>
        <dbReference type="ChEBI" id="CHEBI:58017"/>
    </ligand>
</feature>
<feature type="binding site" evidence="1">
    <location>
        <position position="79"/>
    </location>
    <ligand>
        <name>anthranilate</name>
        <dbReference type="ChEBI" id="CHEBI:16567"/>
        <label>1</label>
    </ligand>
</feature>
<feature type="binding site" evidence="1">
    <location>
        <begin position="82"/>
        <end position="83"/>
    </location>
    <ligand>
        <name>5-phospho-alpha-D-ribose 1-diphosphate</name>
        <dbReference type="ChEBI" id="CHEBI:58017"/>
    </ligand>
</feature>
<feature type="binding site" evidence="1">
    <location>
        <position position="87"/>
    </location>
    <ligand>
        <name>5-phospho-alpha-D-ribose 1-diphosphate</name>
        <dbReference type="ChEBI" id="CHEBI:58017"/>
    </ligand>
</feature>
<feature type="binding site" evidence="1">
    <location>
        <begin position="89"/>
        <end position="92"/>
    </location>
    <ligand>
        <name>5-phospho-alpha-D-ribose 1-diphosphate</name>
        <dbReference type="ChEBI" id="CHEBI:58017"/>
    </ligand>
</feature>
<feature type="binding site" evidence="1">
    <location>
        <position position="91"/>
    </location>
    <ligand>
        <name>Mg(2+)</name>
        <dbReference type="ChEBI" id="CHEBI:18420"/>
        <label>1</label>
    </ligand>
</feature>
<feature type="binding site" evidence="1">
    <location>
        <begin position="107"/>
        <end position="115"/>
    </location>
    <ligand>
        <name>5-phospho-alpha-D-ribose 1-diphosphate</name>
        <dbReference type="ChEBI" id="CHEBI:58017"/>
    </ligand>
</feature>
<feature type="binding site" evidence="1">
    <location>
        <position position="110"/>
    </location>
    <ligand>
        <name>anthranilate</name>
        <dbReference type="ChEBI" id="CHEBI:16567"/>
        <label>1</label>
    </ligand>
</feature>
<feature type="binding site" evidence="1">
    <location>
        <position position="119"/>
    </location>
    <ligand>
        <name>5-phospho-alpha-D-ribose 1-diphosphate</name>
        <dbReference type="ChEBI" id="CHEBI:58017"/>
    </ligand>
</feature>
<feature type="binding site" evidence="1">
    <location>
        <position position="165"/>
    </location>
    <ligand>
        <name>anthranilate</name>
        <dbReference type="ChEBI" id="CHEBI:16567"/>
        <label>2</label>
    </ligand>
</feature>
<feature type="binding site" evidence="1">
    <location>
        <position position="224"/>
    </location>
    <ligand>
        <name>Mg(2+)</name>
        <dbReference type="ChEBI" id="CHEBI:18420"/>
        <label>2</label>
    </ligand>
</feature>
<feature type="binding site" evidence="1">
    <location>
        <position position="225"/>
    </location>
    <ligand>
        <name>Mg(2+)</name>
        <dbReference type="ChEBI" id="CHEBI:18420"/>
        <label>1</label>
    </ligand>
</feature>
<feature type="binding site" evidence="1">
    <location>
        <position position="225"/>
    </location>
    <ligand>
        <name>Mg(2+)</name>
        <dbReference type="ChEBI" id="CHEBI:18420"/>
        <label>2</label>
    </ligand>
</feature>
<gene>
    <name evidence="1" type="primary">trpD</name>
    <name type="ordered locus">TGRD_118</name>
</gene>
<organism>
    <name type="scientific">Endomicrobium trichonymphae</name>
    <dbReference type="NCBI Taxonomy" id="1408204"/>
    <lineage>
        <taxon>Bacteria</taxon>
        <taxon>Pseudomonadati</taxon>
        <taxon>Elusimicrobiota</taxon>
        <taxon>Endomicrobiia</taxon>
        <taxon>Endomicrobiales</taxon>
        <taxon>Endomicrobiaceae</taxon>
        <taxon>Candidatus Endomicrobiellum</taxon>
    </lineage>
</organism>
<protein>
    <recommendedName>
        <fullName evidence="1">Anthranilate phosphoribosyltransferase</fullName>
        <ecNumber evidence="1">2.4.2.18</ecNumber>
    </recommendedName>
</protein>
<dbReference type="EC" id="2.4.2.18" evidence="1"/>
<dbReference type="EMBL" id="AP009510">
    <property type="protein sequence ID" value="BAG13601.1"/>
    <property type="molecule type" value="Genomic_DNA"/>
</dbReference>
<dbReference type="RefSeq" id="WP_015423130.1">
    <property type="nucleotide sequence ID" value="NC_020419.1"/>
</dbReference>
<dbReference type="SMR" id="B1GZB9"/>
<dbReference type="STRING" id="471821.TGRD_118"/>
<dbReference type="KEGG" id="rsd:TGRD_118"/>
<dbReference type="PATRIC" id="fig|471821.5.peg.166"/>
<dbReference type="HOGENOM" id="CLU_034315_2_1_0"/>
<dbReference type="UniPathway" id="UPA00035">
    <property type="reaction ID" value="UER00041"/>
</dbReference>
<dbReference type="Proteomes" id="UP000001691">
    <property type="component" value="Chromosome"/>
</dbReference>
<dbReference type="GO" id="GO:0005829">
    <property type="term" value="C:cytosol"/>
    <property type="evidence" value="ECO:0007669"/>
    <property type="project" value="TreeGrafter"/>
</dbReference>
<dbReference type="GO" id="GO:0004048">
    <property type="term" value="F:anthranilate phosphoribosyltransferase activity"/>
    <property type="evidence" value="ECO:0007669"/>
    <property type="project" value="UniProtKB-UniRule"/>
</dbReference>
<dbReference type="GO" id="GO:0000287">
    <property type="term" value="F:magnesium ion binding"/>
    <property type="evidence" value="ECO:0007669"/>
    <property type="project" value="UniProtKB-UniRule"/>
</dbReference>
<dbReference type="GO" id="GO:0000162">
    <property type="term" value="P:L-tryptophan biosynthetic process"/>
    <property type="evidence" value="ECO:0007669"/>
    <property type="project" value="UniProtKB-UniRule"/>
</dbReference>
<dbReference type="FunFam" id="3.40.1030.10:FF:000002">
    <property type="entry name" value="Anthranilate phosphoribosyltransferase"/>
    <property type="match status" value="1"/>
</dbReference>
<dbReference type="Gene3D" id="3.40.1030.10">
    <property type="entry name" value="Nucleoside phosphorylase/phosphoribosyltransferase catalytic domain"/>
    <property type="match status" value="1"/>
</dbReference>
<dbReference type="Gene3D" id="1.20.970.10">
    <property type="entry name" value="Transferase, Pyrimidine Nucleoside Phosphorylase, Chain C"/>
    <property type="match status" value="1"/>
</dbReference>
<dbReference type="HAMAP" id="MF_00211">
    <property type="entry name" value="TrpD"/>
    <property type="match status" value="1"/>
</dbReference>
<dbReference type="InterPro" id="IPR005940">
    <property type="entry name" value="Anthranilate_Pribosyl_Tfrase"/>
</dbReference>
<dbReference type="InterPro" id="IPR000312">
    <property type="entry name" value="Glycosyl_Trfase_fam3"/>
</dbReference>
<dbReference type="InterPro" id="IPR017459">
    <property type="entry name" value="Glycosyl_Trfase_fam3_N_dom"/>
</dbReference>
<dbReference type="InterPro" id="IPR036320">
    <property type="entry name" value="Glycosyl_Trfase_fam3_N_dom_sf"/>
</dbReference>
<dbReference type="InterPro" id="IPR035902">
    <property type="entry name" value="Nuc_phospho_transferase"/>
</dbReference>
<dbReference type="NCBIfam" id="TIGR01245">
    <property type="entry name" value="trpD"/>
    <property type="match status" value="1"/>
</dbReference>
<dbReference type="PANTHER" id="PTHR43285">
    <property type="entry name" value="ANTHRANILATE PHOSPHORIBOSYLTRANSFERASE"/>
    <property type="match status" value="1"/>
</dbReference>
<dbReference type="PANTHER" id="PTHR43285:SF2">
    <property type="entry name" value="ANTHRANILATE PHOSPHORIBOSYLTRANSFERASE"/>
    <property type="match status" value="1"/>
</dbReference>
<dbReference type="Pfam" id="PF02885">
    <property type="entry name" value="Glycos_trans_3N"/>
    <property type="match status" value="1"/>
</dbReference>
<dbReference type="Pfam" id="PF00591">
    <property type="entry name" value="Glycos_transf_3"/>
    <property type="match status" value="1"/>
</dbReference>
<dbReference type="SUPFAM" id="SSF52418">
    <property type="entry name" value="Nucleoside phosphorylase/phosphoribosyltransferase catalytic domain"/>
    <property type="match status" value="1"/>
</dbReference>
<dbReference type="SUPFAM" id="SSF47648">
    <property type="entry name" value="Nucleoside phosphorylase/phosphoribosyltransferase N-terminal domain"/>
    <property type="match status" value="1"/>
</dbReference>
<name>TRPD_ENDTX</name>
<proteinExistence type="inferred from homology"/>
<comment type="function">
    <text evidence="1">Catalyzes the transfer of the phosphoribosyl group of 5-phosphorylribose-1-pyrophosphate (PRPP) to anthranilate to yield N-(5'-phosphoribosyl)-anthranilate (PRA).</text>
</comment>
<comment type="catalytic activity">
    <reaction evidence="1">
        <text>N-(5-phospho-beta-D-ribosyl)anthranilate + diphosphate = 5-phospho-alpha-D-ribose 1-diphosphate + anthranilate</text>
        <dbReference type="Rhea" id="RHEA:11768"/>
        <dbReference type="ChEBI" id="CHEBI:16567"/>
        <dbReference type="ChEBI" id="CHEBI:18277"/>
        <dbReference type="ChEBI" id="CHEBI:33019"/>
        <dbReference type="ChEBI" id="CHEBI:58017"/>
        <dbReference type="EC" id="2.4.2.18"/>
    </reaction>
</comment>
<comment type="cofactor">
    <cofactor evidence="1">
        <name>Mg(2+)</name>
        <dbReference type="ChEBI" id="CHEBI:18420"/>
    </cofactor>
    <text evidence="1">Binds 2 magnesium ions per monomer.</text>
</comment>
<comment type="pathway">
    <text evidence="1">Amino-acid biosynthesis; L-tryptophan biosynthesis; L-tryptophan from chorismate: step 2/5.</text>
</comment>
<comment type="subunit">
    <text evidence="1">Homodimer.</text>
</comment>
<comment type="similarity">
    <text evidence="1">Belongs to the anthranilate phosphoribosyltransferase family.</text>
</comment>
<keyword id="KW-0028">Amino-acid biosynthesis</keyword>
<keyword id="KW-0057">Aromatic amino acid biosynthesis</keyword>
<keyword id="KW-0328">Glycosyltransferase</keyword>
<keyword id="KW-0460">Magnesium</keyword>
<keyword id="KW-0479">Metal-binding</keyword>
<keyword id="KW-0808">Transferase</keyword>
<keyword id="KW-0822">Tryptophan biosynthesis</keyword>